<dbReference type="EC" id="1.11.1.6"/>
<dbReference type="EMBL" id="AL596174">
    <property type="protein sequence ID" value="CAC98145.1"/>
    <property type="molecule type" value="Genomic_DNA"/>
</dbReference>
<dbReference type="PIR" id="AI1796">
    <property type="entry name" value="AI1796"/>
</dbReference>
<dbReference type="RefSeq" id="WP_010991449.1">
    <property type="nucleotide sequence ID" value="NC_003212.1"/>
</dbReference>
<dbReference type="SMR" id="Q926X0"/>
<dbReference type="STRING" id="272626.gene:17567306"/>
<dbReference type="GeneID" id="93236196"/>
<dbReference type="KEGG" id="lin:kat"/>
<dbReference type="eggNOG" id="COG0753">
    <property type="taxonomic scope" value="Bacteria"/>
</dbReference>
<dbReference type="HOGENOM" id="CLU_010645_2_0_9"/>
<dbReference type="OrthoDB" id="9760293at2"/>
<dbReference type="Proteomes" id="UP000002513">
    <property type="component" value="Chromosome"/>
</dbReference>
<dbReference type="GO" id="GO:0005737">
    <property type="term" value="C:cytoplasm"/>
    <property type="evidence" value="ECO:0007669"/>
    <property type="project" value="UniProtKB-SubCell"/>
</dbReference>
<dbReference type="GO" id="GO:0004096">
    <property type="term" value="F:catalase activity"/>
    <property type="evidence" value="ECO:0007669"/>
    <property type="project" value="UniProtKB-EC"/>
</dbReference>
<dbReference type="GO" id="GO:0020037">
    <property type="term" value="F:heme binding"/>
    <property type="evidence" value="ECO:0007669"/>
    <property type="project" value="InterPro"/>
</dbReference>
<dbReference type="GO" id="GO:0046872">
    <property type="term" value="F:metal ion binding"/>
    <property type="evidence" value="ECO:0007669"/>
    <property type="project" value="UniProtKB-KW"/>
</dbReference>
<dbReference type="GO" id="GO:0042744">
    <property type="term" value="P:hydrogen peroxide catabolic process"/>
    <property type="evidence" value="ECO:0007669"/>
    <property type="project" value="UniProtKB-KW"/>
</dbReference>
<dbReference type="GO" id="GO:0042542">
    <property type="term" value="P:response to hydrogen peroxide"/>
    <property type="evidence" value="ECO:0007669"/>
    <property type="project" value="TreeGrafter"/>
</dbReference>
<dbReference type="CDD" id="cd08154">
    <property type="entry name" value="catalase_clade_1"/>
    <property type="match status" value="1"/>
</dbReference>
<dbReference type="FunFam" id="2.40.180.10:FF:000002">
    <property type="entry name" value="Catalase"/>
    <property type="match status" value="1"/>
</dbReference>
<dbReference type="Gene3D" id="2.40.180.10">
    <property type="entry name" value="Catalase core domain"/>
    <property type="match status" value="1"/>
</dbReference>
<dbReference type="InterPro" id="IPR018028">
    <property type="entry name" value="Catalase"/>
</dbReference>
<dbReference type="InterPro" id="IPR024708">
    <property type="entry name" value="Catalase_AS"/>
</dbReference>
<dbReference type="InterPro" id="IPR024711">
    <property type="entry name" value="Catalase_clade1/3"/>
</dbReference>
<dbReference type="InterPro" id="IPR011614">
    <property type="entry name" value="Catalase_core"/>
</dbReference>
<dbReference type="InterPro" id="IPR002226">
    <property type="entry name" value="Catalase_haem_BS"/>
</dbReference>
<dbReference type="InterPro" id="IPR010582">
    <property type="entry name" value="Catalase_immune_responsive"/>
</dbReference>
<dbReference type="InterPro" id="IPR020835">
    <property type="entry name" value="Catalase_sf"/>
</dbReference>
<dbReference type="PANTHER" id="PTHR11465">
    <property type="entry name" value="CATALASE"/>
    <property type="match status" value="1"/>
</dbReference>
<dbReference type="PANTHER" id="PTHR11465:SF23">
    <property type="entry name" value="CATALASE-2"/>
    <property type="match status" value="1"/>
</dbReference>
<dbReference type="Pfam" id="PF00199">
    <property type="entry name" value="Catalase"/>
    <property type="match status" value="1"/>
</dbReference>
<dbReference type="Pfam" id="PF06628">
    <property type="entry name" value="Catalase-rel"/>
    <property type="match status" value="1"/>
</dbReference>
<dbReference type="PIRSF" id="PIRSF038928">
    <property type="entry name" value="Catalase_clade1-3"/>
    <property type="match status" value="1"/>
</dbReference>
<dbReference type="PRINTS" id="PR00067">
    <property type="entry name" value="CATALASE"/>
</dbReference>
<dbReference type="SMART" id="SM01060">
    <property type="entry name" value="Catalase"/>
    <property type="match status" value="1"/>
</dbReference>
<dbReference type="SUPFAM" id="SSF56634">
    <property type="entry name" value="Heme-dependent catalase-like"/>
    <property type="match status" value="1"/>
</dbReference>
<dbReference type="PROSITE" id="PS00437">
    <property type="entry name" value="CATALASE_1"/>
    <property type="match status" value="1"/>
</dbReference>
<dbReference type="PROSITE" id="PS00438">
    <property type="entry name" value="CATALASE_2"/>
    <property type="match status" value="1"/>
</dbReference>
<dbReference type="PROSITE" id="PS51402">
    <property type="entry name" value="CATALASE_3"/>
    <property type="match status" value="1"/>
</dbReference>
<feature type="chain" id="PRO_0000085015" description="Catalase">
    <location>
        <begin position="1"/>
        <end position="488"/>
    </location>
</feature>
<feature type="region of interest" description="Disordered" evidence="3">
    <location>
        <begin position="1"/>
        <end position="24"/>
    </location>
</feature>
<feature type="compositionally biased region" description="Polar residues" evidence="3">
    <location>
        <begin position="7"/>
        <end position="23"/>
    </location>
</feature>
<feature type="active site" evidence="2">
    <location>
        <position position="55"/>
    </location>
</feature>
<feature type="active site" evidence="2">
    <location>
        <position position="128"/>
    </location>
</feature>
<feature type="binding site" description="axial binding residue" evidence="1">
    <location>
        <position position="338"/>
    </location>
    <ligand>
        <name>heme</name>
        <dbReference type="ChEBI" id="CHEBI:30413"/>
    </ligand>
    <ligandPart>
        <name>Fe</name>
        <dbReference type="ChEBI" id="CHEBI:18248"/>
    </ligandPart>
</feature>
<proteinExistence type="inferred from homology"/>
<comment type="function">
    <text>Decomposes hydrogen peroxide into water and oxygen; serves to protect cells from the toxic effects of hydrogen peroxide.</text>
</comment>
<comment type="catalytic activity">
    <reaction evidence="2">
        <text>2 H2O2 = O2 + 2 H2O</text>
        <dbReference type="Rhea" id="RHEA:20309"/>
        <dbReference type="ChEBI" id="CHEBI:15377"/>
        <dbReference type="ChEBI" id="CHEBI:15379"/>
        <dbReference type="ChEBI" id="CHEBI:16240"/>
        <dbReference type="EC" id="1.11.1.6"/>
    </reaction>
</comment>
<comment type="cofactor">
    <cofactor>
        <name>heme</name>
        <dbReference type="ChEBI" id="CHEBI:30413"/>
    </cofactor>
</comment>
<comment type="subcellular location">
    <subcellularLocation>
        <location evidence="4">Cytoplasm</location>
    </subcellularLocation>
</comment>
<comment type="similarity">
    <text evidence="4">Belongs to the catalase family.</text>
</comment>
<evidence type="ECO:0000250" key="1"/>
<evidence type="ECO:0000255" key="2">
    <source>
        <dbReference type="PROSITE-ProRule" id="PRU10013"/>
    </source>
</evidence>
<evidence type="ECO:0000256" key="3">
    <source>
        <dbReference type="SAM" id="MobiDB-lite"/>
    </source>
</evidence>
<evidence type="ECO:0000305" key="4"/>
<sequence>MTERKNLTTNQGTPVGDNQNSMTAGLKGPTLLEDYVLIEKLAHFDRERVPERVVHARGAGAHGKFVTKKSMKKYTIANFLQEEGTETEVFARFSTVIHGQHSPETLRDPRGFSVKFYTEEGNYDFVGNNLPVFFIRDAIKFPDVIHSLKPDPRTNIQDGNRYWDFFSLSPEATTMIMYLFSDEGTPASYREIRGSSVHAFKWINEEGKTVYVKLRWVPKAGIVNLSTEQAAQIQAKEFNHASRDLYEAIENGDYPEWDLYVQVLDPKDLDSFDFNPLDATKDWFEDVFPYEHVGTMTLNRNPDNIFAETESVGFNPGVLVRGMLPSEDRLLQGRLFSYSDTQRHRVGPNYLQLPINSPKAPVANNQRDGYMPFKQQTSSINYEPNSYETEPKENPAFIEQEQEIRGDISGRLIAEKPNNFGHAKEVWDRYSDAERAALVKNIVDDWSGVRDDIKIRNLRNFYQIEPEFANRVADGTGINLEEHVADLK</sequence>
<accession>Q926X0</accession>
<reference key="1">
    <citation type="journal article" date="2001" name="Science">
        <title>Comparative genomics of Listeria species.</title>
        <authorList>
            <person name="Glaser P."/>
            <person name="Frangeul L."/>
            <person name="Buchrieser C."/>
            <person name="Rusniok C."/>
            <person name="Amend A."/>
            <person name="Baquero F."/>
            <person name="Berche P."/>
            <person name="Bloecker H."/>
            <person name="Brandt P."/>
            <person name="Chakraborty T."/>
            <person name="Charbit A."/>
            <person name="Chetouani F."/>
            <person name="Couve E."/>
            <person name="de Daruvar A."/>
            <person name="Dehoux P."/>
            <person name="Domann E."/>
            <person name="Dominguez-Bernal G."/>
            <person name="Duchaud E."/>
            <person name="Durant L."/>
            <person name="Dussurget O."/>
            <person name="Entian K.-D."/>
            <person name="Fsihi H."/>
            <person name="Garcia-del Portillo F."/>
            <person name="Garrido P."/>
            <person name="Gautier L."/>
            <person name="Goebel W."/>
            <person name="Gomez-Lopez N."/>
            <person name="Hain T."/>
            <person name="Hauf J."/>
            <person name="Jackson D."/>
            <person name="Jones L.-M."/>
            <person name="Kaerst U."/>
            <person name="Kreft J."/>
            <person name="Kuhn M."/>
            <person name="Kunst F."/>
            <person name="Kurapkat G."/>
            <person name="Madueno E."/>
            <person name="Maitournam A."/>
            <person name="Mata Vicente J."/>
            <person name="Ng E."/>
            <person name="Nedjari H."/>
            <person name="Nordsiek G."/>
            <person name="Novella S."/>
            <person name="de Pablos B."/>
            <person name="Perez-Diaz J.-C."/>
            <person name="Purcell R."/>
            <person name="Remmel B."/>
            <person name="Rose M."/>
            <person name="Schlueter T."/>
            <person name="Simoes N."/>
            <person name="Tierrez A."/>
            <person name="Vazquez-Boland J.-A."/>
            <person name="Voss H."/>
            <person name="Wehland J."/>
            <person name="Cossart P."/>
        </authorList>
    </citation>
    <scope>NUCLEOTIDE SEQUENCE [LARGE SCALE GENOMIC DNA]</scope>
    <source>
        <strain>ATCC BAA-680 / CLIP 11262</strain>
    </source>
</reference>
<protein>
    <recommendedName>
        <fullName>Catalase</fullName>
        <ecNumber>1.11.1.6</ecNumber>
    </recommendedName>
</protein>
<gene>
    <name type="primary">kat</name>
    <name type="ordered locus">lin2920</name>
</gene>
<organism>
    <name type="scientific">Listeria innocua serovar 6a (strain ATCC BAA-680 / CLIP 11262)</name>
    <dbReference type="NCBI Taxonomy" id="272626"/>
    <lineage>
        <taxon>Bacteria</taxon>
        <taxon>Bacillati</taxon>
        <taxon>Bacillota</taxon>
        <taxon>Bacilli</taxon>
        <taxon>Bacillales</taxon>
        <taxon>Listeriaceae</taxon>
        <taxon>Listeria</taxon>
    </lineage>
</organism>
<keyword id="KW-0963">Cytoplasm</keyword>
<keyword id="KW-0349">Heme</keyword>
<keyword id="KW-0376">Hydrogen peroxide</keyword>
<keyword id="KW-0408">Iron</keyword>
<keyword id="KW-0479">Metal-binding</keyword>
<keyword id="KW-0560">Oxidoreductase</keyword>
<keyword id="KW-0575">Peroxidase</keyword>
<name>CATA_LISIN</name>